<evidence type="ECO:0000255" key="1">
    <source>
        <dbReference type="HAMAP-Rule" id="MF_01861"/>
    </source>
</evidence>
<reference key="1">
    <citation type="journal article" date="2007" name="Nat. Biotechnol.">
        <title>Comparative analysis of the complete genome sequence of the plant growth-promoting bacterium Bacillus amyloliquefaciens FZB42.</title>
        <authorList>
            <person name="Chen X.H."/>
            <person name="Koumoutsi A."/>
            <person name="Scholz R."/>
            <person name="Eisenreich A."/>
            <person name="Schneider K."/>
            <person name="Heinemeyer I."/>
            <person name="Morgenstern B."/>
            <person name="Voss B."/>
            <person name="Hess W.R."/>
            <person name="Reva O."/>
            <person name="Junge H."/>
            <person name="Voigt B."/>
            <person name="Jungblut P.R."/>
            <person name="Vater J."/>
            <person name="Suessmuth R."/>
            <person name="Liesegang H."/>
            <person name="Strittmatter A."/>
            <person name="Gottschalk G."/>
            <person name="Borriss R."/>
        </authorList>
    </citation>
    <scope>NUCLEOTIDE SEQUENCE [LARGE SCALE GENOMIC DNA]</scope>
    <source>
        <strain>DSM 23117 / BGSC 10A6 / LMG 26770 / FZB42</strain>
    </source>
</reference>
<dbReference type="EMBL" id="CP000560">
    <property type="protein sequence ID" value="ABS73524.1"/>
    <property type="molecule type" value="Genomic_DNA"/>
</dbReference>
<dbReference type="RefSeq" id="WP_012117290.1">
    <property type="nucleotide sequence ID" value="NC_009725.2"/>
</dbReference>
<dbReference type="GeneID" id="93080296"/>
<dbReference type="KEGG" id="bay:RBAM_011600"/>
<dbReference type="HOGENOM" id="CLU_142282_0_0_9"/>
<dbReference type="Proteomes" id="UP000001120">
    <property type="component" value="Chromosome"/>
</dbReference>
<dbReference type="HAMAP" id="MF_01861">
    <property type="entry name" value="UPF0738"/>
    <property type="match status" value="1"/>
</dbReference>
<dbReference type="InterPro" id="IPR020908">
    <property type="entry name" value="UPF0738"/>
</dbReference>
<dbReference type="Pfam" id="PF19785">
    <property type="entry name" value="UPF0738"/>
    <property type="match status" value="1"/>
</dbReference>
<accession>A7Z3E8</accession>
<feature type="chain" id="PRO_0000369636" description="UPF0738 protein RBAM_011600">
    <location>
        <begin position="1"/>
        <end position="121"/>
    </location>
</feature>
<gene>
    <name type="ordered locus">RBAM_011600</name>
</gene>
<sequence length="121" mass="13731">MQKRIEIQNASLTEDALRLKCGEDLSGAERKASGQMLVDSDHFAFVYILESADSFEYVIIKEHIWPDLKEALDQRKPAVLEAGGKTVELSGLHEELDYLLENIKDNANYGDMEEKVKNVFL</sequence>
<comment type="similarity">
    <text evidence="1">Belongs to the UPF0738 family.</text>
</comment>
<protein>
    <recommendedName>
        <fullName evidence="1">UPF0738 protein RBAM_011600</fullName>
    </recommendedName>
</protein>
<organism>
    <name type="scientific">Bacillus velezensis (strain DSM 23117 / BGSC 10A6 / LMG 26770 / FZB42)</name>
    <name type="common">Bacillus amyloliquefaciens subsp. plantarum</name>
    <dbReference type="NCBI Taxonomy" id="326423"/>
    <lineage>
        <taxon>Bacteria</taxon>
        <taxon>Bacillati</taxon>
        <taxon>Bacillota</taxon>
        <taxon>Bacilli</taxon>
        <taxon>Bacillales</taxon>
        <taxon>Bacillaceae</taxon>
        <taxon>Bacillus</taxon>
        <taxon>Bacillus amyloliquefaciens group</taxon>
    </lineage>
</organism>
<name>Y1160_BACVZ</name>
<proteinExistence type="inferred from homology"/>